<name>COAD_METBF</name>
<proteinExistence type="inferred from homology"/>
<evidence type="ECO:0000255" key="1">
    <source>
        <dbReference type="HAMAP-Rule" id="MF_00647"/>
    </source>
</evidence>
<keyword id="KW-0067">ATP-binding</keyword>
<keyword id="KW-0173">Coenzyme A biosynthesis</keyword>
<keyword id="KW-0963">Cytoplasm</keyword>
<keyword id="KW-0547">Nucleotide-binding</keyword>
<keyword id="KW-0548">Nucleotidyltransferase</keyword>
<keyword id="KW-0808">Transferase</keyword>
<organism>
    <name type="scientific">Methanosarcina barkeri (strain Fusaro / DSM 804)</name>
    <dbReference type="NCBI Taxonomy" id="269797"/>
    <lineage>
        <taxon>Archaea</taxon>
        <taxon>Methanobacteriati</taxon>
        <taxon>Methanobacteriota</taxon>
        <taxon>Stenosarchaea group</taxon>
        <taxon>Methanomicrobia</taxon>
        <taxon>Methanosarcinales</taxon>
        <taxon>Methanosarcinaceae</taxon>
        <taxon>Methanosarcina</taxon>
    </lineage>
</organism>
<sequence>MPKVAVGGTFQYFHDGHAKLIEKAFEIAEDGKVHIGLTSDEMLSKSHSVDNYEKRRNWLLQYIKEMGIPDDRYEITKLNDPYGPALEEDFDYIIVSPETYPVALKMNRIREEKGKKLLEIVYVEYVMAEDGIPISSTRIAKGEIDRHGRLKKNIKHCNTKN</sequence>
<protein>
    <recommendedName>
        <fullName evidence="1">Phosphopantetheine adenylyltransferase</fullName>
        <ecNumber evidence="1">2.7.7.3</ecNumber>
    </recommendedName>
    <alternativeName>
        <fullName evidence="1">Dephospho-CoA pyrophosphorylase</fullName>
    </alternativeName>
    <alternativeName>
        <fullName evidence="1">Pantetheine-phosphate adenylyltransferase</fullName>
        <shortName evidence="1">PPAT</shortName>
    </alternativeName>
</protein>
<feature type="chain" id="PRO_1000056951" description="Phosphopantetheine adenylyltransferase">
    <location>
        <begin position="1"/>
        <end position="161"/>
    </location>
</feature>
<accession>Q46A30</accession>
<gene>
    <name evidence="1" type="primary">coaD</name>
    <name type="ordered locus">Mbar_A2339</name>
</gene>
<dbReference type="EC" id="2.7.7.3" evidence="1"/>
<dbReference type="EMBL" id="CP000099">
    <property type="protein sequence ID" value="AAZ71262.1"/>
    <property type="molecule type" value="Genomic_DNA"/>
</dbReference>
<dbReference type="SMR" id="Q46A30"/>
<dbReference type="STRING" id="269797.Mbar_A2339"/>
<dbReference type="PaxDb" id="269797-Mbar_A2339"/>
<dbReference type="KEGG" id="mba:Mbar_A2339"/>
<dbReference type="eggNOG" id="arCOG01223">
    <property type="taxonomic scope" value="Archaea"/>
</dbReference>
<dbReference type="HOGENOM" id="CLU_035272_5_0_2"/>
<dbReference type="OrthoDB" id="53228at2157"/>
<dbReference type="UniPathway" id="UPA00241"/>
<dbReference type="GO" id="GO:0005737">
    <property type="term" value="C:cytoplasm"/>
    <property type="evidence" value="ECO:0007669"/>
    <property type="project" value="UniProtKB-SubCell"/>
</dbReference>
<dbReference type="GO" id="GO:0005524">
    <property type="term" value="F:ATP binding"/>
    <property type="evidence" value="ECO:0007669"/>
    <property type="project" value="UniProtKB-KW"/>
</dbReference>
<dbReference type="GO" id="GO:0004595">
    <property type="term" value="F:pantetheine-phosphate adenylyltransferase activity"/>
    <property type="evidence" value="ECO:0007669"/>
    <property type="project" value="UniProtKB-UniRule"/>
</dbReference>
<dbReference type="GO" id="GO:0015937">
    <property type="term" value="P:coenzyme A biosynthetic process"/>
    <property type="evidence" value="ECO:0007669"/>
    <property type="project" value="UniProtKB-UniRule"/>
</dbReference>
<dbReference type="CDD" id="cd02164">
    <property type="entry name" value="PPAT_CoAS"/>
    <property type="match status" value="1"/>
</dbReference>
<dbReference type="Gene3D" id="3.40.50.620">
    <property type="entry name" value="HUPs"/>
    <property type="match status" value="1"/>
</dbReference>
<dbReference type="HAMAP" id="MF_00647">
    <property type="entry name" value="PPAT_arch"/>
    <property type="match status" value="1"/>
</dbReference>
<dbReference type="InterPro" id="IPR004821">
    <property type="entry name" value="Cyt_trans-like"/>
</dbReference>
<dbReference type="InterPro" id="IPR023540">
    <property type="entry name" value="PPAT_arch"/>
</dbReference>
<dbReference type="InterPro" id="IPR014729">
    <property type="entry name" value="Rossmann-like_a/b/a_fold"/>
</dbReference>
<dbReference type="NCBIfam" id="TIGR00125">
    <property type="entry name" value="cyt_tran_rel"/>
    <property type="match status" value="1"/>
</dbReference>
<dbReference type="NCBIfam" id="NF001985">
    <property type="entry name" value="PRK00777.1"/>
    <property type="match status" value="1"/>
</dbReference>
<dbReference type="Pfam" id="PF01467">
    <property type="entry name" value="CTP_transf_like"/>
    <property type="match status" value="1"/>
</dbReference>
<dbReference type="SUPFAM" id="SSF52374">
    <property type="entry name" value="Nucleotidylyl transferase"/>
    <property type="match status" value="1"/>
</dbReference>
<comment type="function">
    <text evidence="1">Reversibly transfers an adenylyl group from ATP to 4'-phosphopantetheine, yielding dephospho-CoA (dPCoA) and pyrophosphate.</text>
</comment>
<comment type="catalytic activity">
    <reaction evidence="1">
        <text>(R)-4'-phosphopantetheine + ATP + H(+) = 3'-dephospho-CoA + diphosphate</text>
        <dbReference type="Rhea" id="RHEA:19801"/>
        <dbReference type="ChEBI" id="CHEBI:15378"/>
        <dbReference type="ChEBI" id="CHEBI:30616"/>
        <dbReference type="ChEBI" id="CHEBI:33019"/>
        <dbReference type="ChEBI" id="CHEBI:57328"/>
        <dbReference type="ChEBI" id="CHEBI:61723"/>
        <dbReference type="EC" id="2.7.7.3"/>
    </reaction>
</comment>
<comment type="pathway">
    <text evidence="1">Cofactor biosynthesis; coenzyme A biosynthesis.</text>
</comment>
<comment type="subcellular location">
    <subcellularLocation>
        <location evidence="1">Cytoplasm</location>
    </subcellularLocation>
</comment>
<comment type="similarity">
    <text evidence="1">Belongs to the eukaryotic CoaD family.</text>
</comment>
<reference key="1">
    <citation type="journal article" date="2006" name="J. Bacteriol.">
        <title>The Methanosarcina barkeri genome: comparative analysis with Methanosarcina acetivorans and Methanosarcina mazei reveals extensive rearrangement within methanosarcinal genomes.</title>
        <authorList>
            <person name="Maeder D.L."/>
            <person name="Anderson I."/>
            <person name="Brettin T.S."/>
            <person name="Bruce D.C."/>
            <person name="Gilna P."/>
            <person name="Han C.S."/>
            <person name="Lapidus A."/>
            <person name="Metcalf W.W."/>
            <person name="Saunders E."/>
            <person name="Tapia R."/>
            <person name="Sowers K.R."/>
        </authorList>
    </citation>
    <scope>NUCLEOTIDE SEQUENCE [LARGE SCALE GENOMIC DNA]</scope>
    <source>
        <strain>Fusaro / DSM 804</strain>
    </source>
</reference>